<gene>
    <name evidence="1" type="primary">rpmB</name>
    <name type="ordered locus">RHE_CH03816</name>
</gene>
<protein>
    <recommendedName>
        <fullName evidence="1">Large ribosomal subunit protein bL28</fullName>
    </recommendedName>
    <alternativeName>
        <fullName evidence="2">50S ribosomal protein L28</fullName>
    </alternativeName>
</protein>
<proteinExistence type="inferred from homology"/>
<feature type="chain" id="PRO_1000007326" description="Large ribosomal subunit protein bL28">
    <location>
        <begin position="1"/>
        <end position="98"/>
    </location>
</feature>
<accession>Q2K3M2</accession>
<evidence type="ECO:0000255" key="1">
    <source>
        <dbReference type="HAMAP-Rule" id="MF_00373"/>
    </source>
</evidence>
<evidence type="ECO:0000305" key="2"/>
<sequence length="98" mass="10861">MSRVCELTGKAVLTGNNVSHANNKTKRRFLPNLCQVTLISDALNQRYRLRVSAAALRSVEHRGGLDAFLIKASENELSMRARLLRRQIVKKTAEAAAA</sequence>
<organism>
    <name type="scientific">Rhizobium etli (strain ATCC 51251 / DSM 11541 / JCM 21823 / NBRC 15573 / CFN 42)</name>
    <dbReference type="NCBI Taxonomy" id="347834"/>
    <lineage>
        <taxon>Bacteria</taxon>
        <taxon>Pseudomonadati</taxon>
        <taxon>Pseudomonadota</taxon>
        <taxon>Alphaproteobacteria</taxon>
        <taxon>Hyphomicrobiales</taxon>
        <taxon>Rhizobiaceae</taxon>
        <taxon>Rhizobium/Agrobacterium group</taxon>
        <taxon>Rhizobium</taxon>
    </lineage>
</organism>
<comment type="similarity">
    <text evidence="1">Belongs to the bacterial ribosomal protein bL28 family.</text>
</comment>
<name>RL28_RHIEC</name>
<keyword id="KW-1185">Reference proteome</keyword>
<keyword id="KW-0687">Ribonucleoprotein</keyword>
<keyword id="KW-0689">Ribosomal protein</keyword>
<reference key="1">
    <citation type="journal article" date="2006" name="Proc. Natl. Acad. Sci. U.S.A.">
        <title>The partitioned Rhizobium etli genome: genetic and metabolic redundancy in seven interacting replicons.</title>
        <authorList>
            <person name="Gonzalez V."/>
            <person name="Santamaria R.I."/>
            <person name="Bustos P."/>
            <person name="Hernandez-Gonzalez I."/>
            <person name="Medrano-Soto A."/>
            <person name="Moreno-Hagelsieb G."/>
            <person name="Janga S.C."/>
            <person name="Ramirez M.A."/>
            <person name="Jimenez-Jacinto V."/>
            <person name="Collado-Vides J."/>
            <person name="Davila G."/>
        </authorList>
    </citation>
    <scope>NUCLEOTIDE SEQUENCE [LARGE SCALE GENOMIC DNA]</scope>
    <source>
        <strain>ATCC 51251 / DSM 11541 / JCM 21823 / NBRC 15573 / CFN 42</strain>
    </source>
</reference>
<dbReference type="EMBL" id="CP000133">
    <property type="protein sequence ID" value="ABC92564.1"/>
    <property type="molecule type" value="Genomic_DNA"/>
</dbReference>
<dbReference type="RefSeq" id="WP_008527777.1">
    <property type="nucleotide sequence ID" value="NC_007761.1"/>
</dbReference>
<dbReference type="SMR" id="Q2K3M2"/>
<dbReference type="GeneID" id="66148066"/>
<dbReference type="KEGG" id="ret:RHE_CH03816"/>
<dbReference type="eggNOG" id="COG0227">
    <property type="taxonomic scope" value="Bacteria"/>
</dbReference>
<dbReference type="HOGENOM" id="CLU_064548_4_2_5"/>
<dbReference type="OrthoDB" id="9805609at2"/>
<dbReference type="Proteomes" id="UP000001936">
    <property type="component" value="Chromosome"/>
</dbReference>
<dbReference type="GO" id="GO:0022625">
    <property type="term" value="C:cytosolic large ribosomal subunit"/>
    <property type="evidence" value="ECO:0007669"/>
    <property type="project" value="TreeGrafter"/>
</dbReference>
<dbReference type="GO" id="GO:0003735">
    <property type="term" value="F:structural constituent of ribosome"/>
    <property type="evidence" value="ECO:0007669"/>
    <property type="project" value="InterPro"/>
</dbReference>
<dbReference type="GO" id="GO:0006412">
    <property type="term" value="P:translation"/>
    <property type="evidence" value="ECO:0007669"/>
    <property type="project" value="UniProtKB-UniRule"/>
</dbReference>
<dbReference type="Gene3D" id="2.30.170.40">
    <property type="entry name" value="Ribosomal protein L28/L24"/>
    <property type="match status" value="1"/>
</dbReference>
<dbReference type="HAMAP" id="MF_00373">
    <property type="entry name" value="Ribosomal_bL28"/>
    <property type="match status" value="1"/>
</dbReference>
<dbReference type="InterPro" id="IPR026569">
    <property type="entry name" value="Ribosomal_bL28"/>
</dbReference>
<dbReference type="InterPro" id="IPR034704">
    <property type="entry name" value="Ribosomal_bL28/bL31-like_sf"/>
</dbReference>
<dbReference type="InterPro" id="IPR001383">
    <property type="entry name" value="Ribosomal_bL28_bact-type"/>
</dbReference>
<dbReference type="InterPro" id="IPR037147">
    <property type="entry name" value="Ribosomal_bL28_sf"/>
</dbReference>
<dbReference type="NCBIfam" id="TIGR00009">
    <property type="entry name" value="L28"/>
    <property type="match status" value="1"/>
</dbReference>
<dbReference type="PANTHER" id="PTHR13528">
    <property type="entry name" value="39S RIBOSOMAL PROTEIN L28, MITOCHONDRIAL"/>
    <property type="match status" value="1"/>
</dbReference>
<dbReference type="PANTHER" id="PTHR13528:SF2">
    <property type="entry name" value="LARGE RIBOSOMAL SUBUNIT PROTEIN BL28M"/>
    <property type="match status" value="1"/>
</dbReference>
<dbReference type="Pfam" id="PF00830">
    <property type="entry name" value="Ribosomal_L28"/>
    <property type="match status" value="1"/>
</dbReference>
<dbReference type="SUPFAM" id="SSF143800">
    <property type="entry name" value="L28p-like"/>
    <property type="match status" value="1"/>
</dbReference>